<protein>
    <recommendedName>
        <fullName evidence="5">Kinesin-like protein KIN-7J</fullName>
    </recommendedName>
</protein>
<dbReference type="EMBL" id="AB016888">
    <property type="protein sequence ID" value="BAB10490.1"/>
    <property type="status" value="ALT_SEQ"/>
    <property type="molecule type" value="Genomic_DNA"/>
</dbReference>
<dbReference type="EMBL" id="CP002688">
    <property type="protein sequence ID" value="AED94816.1"/>
    <property type="status" value="ALT_SEQ"/>
    <property type="molecule type" value="Genomic_DNA"/>
</dbReference>
<dbReference type="RefSeq" id="NP_199064.1">
    <property type="nucleotide sequence ID" value="NM_123614.2"/>
</dbReference>
<dbReference type="SMR" id="Q9FIG8"/>
<dbReference type="FunCoup" id="Q9FIG8">
    <property type="interactions" value="83"/>
</dbReference>
<dbReference type="STRING" id="3702.Q9FIG8"/>
<dbReference type="iPTMnet" id="Q9FIG8"/>
<dbReference type="PeptideAtlas" id="Q9FIG8"/>
<dbReference type="GeneID" id="834256"/>
<dbReference type="KEGG" id="ath:AT5G42490"/>
<dbReference type="Araport" id="AT5G42490"/>
<dbReference type="TAIR" id="AT5G42490"/>
<dbReference type="HOGENOM" id="CLU_013407_0_0_1"/>
<dbReference type="InParanoid" id="Q9FIG8"/>
<dbReference type="PRO" id="PR:Q9FIG8"/>
<dbReference type="Proteomes" id="UP000006548">
    <property type="component" value="Chromosome 5"/>
</dbReference>
<dbReference type="ExpressionAtlas" id="Q9FIG8">
    <property type="expression patterns" value="baseline and differential"/>
</dbReference>
<dbReference type="GO" id="GO:0005874">
    <property type="term" value="C:microtubule"/>
    <property type="evidence" value="ECO:0007669"/>
    <property type="project" value="UniProtKB-KW"/>
</dbReference>
<dbReference type="GO" id="GO:0005524">
    <property type="term" value="F:ATP binding"/>
    <property type="evidence" value="ECO:0007669"/>
    <property type="project" value="UniProtKB-KW"/>
</dbReference>
<dbReference type="GO" id="GO:0008017">
    <property type="term" value="F:microtubule binding"/>
    <property type="evidence" value="ECO:0007669"/>
    <property type="project" value="InterPro"/>
</dbReference>
<dbReference type="GO" id="GO:0003777">
    <property type="term" value="F:microtubule motor activity"/>
    <property type="evidence" value="ECO:0007669"/>
    <property type="project" value="InterPro"/>
</dbReference>
<dbReference type="GO" id="GO:0007018">
    <property type="term" value="P:microtubule-based movement"/>
    <property type="evidence" value="ECO:0007669"/>
    <property type="project" value="InterPro"/>
</dbReference>
<dbReference type="FunFam" id="3.40.850.10:FF:000228">
    <property type="entry name" value="Kinesin motor family protein"/>
    <property type="match status" value="1"/>
</dbReference>
<dbReference type="Gene3D" id="3.40.850.10">
    <property type="entry name" value="Kinesin motor domain"/>
    <property type="match status" value="1"/>
</dbReference>
<dbReference type="InterPro" id="IPR027640">
    <property type="entry name" value="Kinesin-like_fam"/>
</dbReference>
<dbReference type="InterPro" id="IPR019821">
    <property type="entry name" value="Kinesin_motor_CS"/>
</dbReference>
<dbReference type="InterPro" id="IPR001752">
    <property type="entry name" value="Kinesin_motor_dom"/>
</dbReference>
<dbReference type="InterPro" id="IPR036961">
    <property type="entry name" value="Kinesin_motor_dom_sf"/>
</dbReference>
<dbReference type="InterPro" id="IPR021881">
    <property type="entry name" value="NACK_C"/>
</dbReference>
<dbReference type="InterPro" id="IPR027417">
    <property type="entry name" value="P-loop_NTPase"/>
</dbReference>
<dbReference type="PANTHER" id="PTHR47968">
    <property type="entry name" value="CENTROMERE PROTEIN E"/>
    <property type="match status" value="1"/>
</dbReference>
<dbReference type="PANTHER" id="PTHR47968:SF43">
    <property type="entry name" value="KINESIN-LIKE PROTEIN KIN-7J"/>
    <property type="match status" value="1"/>
</dbReference>
<dbReference type="Pfam" id="PF11995">
    <property type="entry name" value="DUF3490"/>
    <property type="match status" value="1"/>
</dbReference>
<dbReference type="Pfam" id="PF00225">
    <property type="entry name" value="Kinesin"/>
    <property type="match status" value="1"/>
</dbReference>
<dbReference type="PRINTS" id="PR00380">
    <property type="entry name" value="KINESINHEAVY"/>
</dbReference>
<dbReference type="SMART" id="SM00129">
    <property type="entry name" value="KISc"/>
    <property type="match status" value="1"/>
</dbReference>
<dbReference type="SUPFAM" id="SSF52540">
    <property type="entry name" value="P-loop containing nucleoside triphosphate hydrolases"/>
    <property type="match status" value="1"/>
</dbReference>
<dbReference type="PROSITE" id="PS00411">
    <property type="entry name" value="KINESIN_MOTOR_1"/>
    <property type="match status" value="1"/>
</dbReference>
<dbReference type="PROSITE" id="PS50067">
    <property type="entry name" value="KINESIN_MOTOR_2"/>
    <property type="match status" value="1"/>
</dbReference>
<feature type="chain" id="PRO_0000436468" description="Kinesin-like protein KIN-7J">
    <location>
        <begin position="1"/>
        <end position="930"/>
    </location>
</feature>
<feature type="domain" description="Kinesin motor" evidence="2">
    <location>
        <begin position="9"/>
        <end position="273"/>
    </location>
</feature>
<feature type="region of interest" description="Disordered" evidence="3">
    <location>
        <begin position="449"/>
        <end position="569"/>
    </location>
</feature>
<feature type="region of interest" description="Disordered" evidence="3">
    <location>
        <begin position="655"/>
        <end position="686"/>
    </location>
</feature>
<feature type="compositionally biased region" description="Low complexity" evidence="3">
    <location>
        <begin position="459"/>
        <end position="468"/>
    </location>
</feature>
<feature type="compositionally biased region" description="Basic and acidic residues" evidence="3">
    <location>
        <begin position="473"/>
        <end position="482"/>
    </location>
</feature>
<feature type="compositionally biased region" description="Basic and acidic residues" evidence="3">
    <location>
        <begin position="533"/>
        <end position="558"/>
    </location>
</feature>
<feature type="compositionally biased region" description="Low complexity" evidence="3">
    <location>
        <begin position="666"/>
        <end position="681"/>
    </location>
</feature>
<feature type="binding site" evidence="2">
    <location>
        <begin position="95"/>
        <end position="102"/>
    </location>
    <ligand>
        <name>ATP</name>
        <dbReference type="ChEBI" id="CHEBI:30616"/>
    </ligand>
</feature>
<feature type="cross-link" description="Glycyl lysine isopeptide (Lys-Gly) (interchain with G-Cter in ubiquitin)" evidence="1">
    <location>
        <position position="805"/>
    </location>
</feature>
<reference key="1">
    <citation type="journal article" date="1998" name="DNA Res.">
        <title>Structural analysis of Arabidopsis thaliana chromosome 5. VIII. Sequence features of the regions of 1,081,958 bp covered by seventeen physically assigned P1 and TAC clones.</title>
        <authorList>
            <person name="Asamizu E."/>
            <person name="Sato S."/>
            <person name="Kaneko T."/>
            <person name="Nakamura Y."/>
            <person name="Kotani H."/>
            <person name="Miyajima N."/>
            <person name="Tabata S."/>
        </authorList>
    </citation>
    <scope>NUCLEOTIDE SEQUENCE [LARGE SCALE GENOMIC DNA]</scope>
    <source>
        <strain>cv. Columbia</strain>
    </source>
</reference>
<reference key="2">
    <citation type="journal article" date="2017" name="Plant J.">
        <title>Araport11: a complete reannotation of the Arabidopsis thaliana reference genome.</title>
        <authorList>
            <person name="Cheng C.Y."/>
            <person name="Krishnakumar V."/>
            <person name="Chan A.P."/>
            <person name="Thibaud-Nissen F."/>
            <person name="Schobel S."/>
            <person name="Town C.D."/>
        </authorList>
    </citation>
    <scope>GENOME REANNOTATION</scope>
    <source>
        <strain>cv. Columbia</strain>
    </source>
</reference>
<reference key="3">
    <citation type="journal article" date="2001" name="BMC Genomics">
        <title>Kinesins in the Arabidopsis genome: a comparative analysis among eukaryotes.</title>
        <authorList>
            <person name="Reddy A.S."/>
            <person name="Day I.S."/>
        </authorList>
    </citation>
    <scope>GENE FAMILY</scope>
</reference>
<reference key="4">
    <citation type="journal article" date="2006" name="BMC Genomics">
        <title>Comprehensive comparative analysis of kinesins in photosynthetic eukaryotes.</title>
        <authorList>
            <person name="Richardson D.N."/>
            <person name="Simmons M.P."/>
            <person name="Reddy A.S."/>
        </authorList>
    </citation>
    <scope>GENE FAMILY</scope>
    <scope>NOMENCLATURE</scope>
</reference>
<reference key="5">
    <citation type="journal article" date="2012" name="Protoplasma">
        <title>Functions of the Arabidopsis kinesin superfamily of microtubule-based motor proteins.</title>
        <authorList>
            <person name="Zhu C."/>
            <person name="Dixit R."/>
        </authorList>
    </citation>
    <scope>REVIEW</scope>
</reference>
<accession>Q9FIG8</accession>
<name>KN7J_ARATH</name>
<proteinExistence type="inferred from homology"/>
<keyword id="KW-0067">ATP-binding</keyword>
<keyword id="KW-1017">Isopeptide bond</keyword>
<keyword id="KW-0493">Microtubule</keyword>
<keyword id="KW-0505">Motor protein</keyword>
<keyword id="KW-0547">Nucleotide-binding</keyword>
<keyword id="KW-1185">Reference proteome</keyword>
<keyword id="KW-0832">Ubl conjugation</keyword>
<sequence>MASGGKGEKILVSVRVRPQNEKEKARNDICDWECVNNTTIVCNNNLPERSLFPSTYTFDKVFGFDSPTKQVYEDGAKEVALCVLGGINSSIFAYGQTSSGKTYTMCGITKFAMDDIFCYIQKHTDRKFTLKFSAIEIYNEAVRDLLSGDNNQRRLLDDPERGTVVEKLIEETIQDRTHLEELLTVCETQRKIGETSLNEVSSRSHQILRLTIESTGREYSPDSSSTLAASVCFIDLAGSERASQTLSAGTRLKEGCHINRSLLTLGTVIRKLRFDPCDIAQSQVENLLKSTAEERSSRMDEQSMFSSMDFDADFRRRSYDSTDLGEPSIINNLTERNFEFLENSEEDDFLLDDKTPQFSRHNLYDDWEELVQITDERLEDACKEVRCIEPEAEQSSGQPAACESHDSLDDIKAENEDMEISTPAEKENVDLSLKTIDVNAKPETYELTLKNSDLEIGPSVEAQESQESVNEEEQMKNEERKMSPSTKQAEQCLNKEENAQSEQQSTEDCELNSLPINNQSEATVEVELTPNDAKLDEDATSRDKWESKQQQEADKDCNESSVCKNIGTDDNDNDTYMALKEKVKEMQKKIEYLMSMHTAEQQQSPSFRRDFKSPPEYFTAKRSRSCRENLLSVRSPHWFESLEVSNNTSPTWRVMQTKASPGRPNTSSISFDSGSSTSIDTRSLKDYDPEMGNSFREFVAGLEEMAKKHHSIDSTPELDYGIPYAPTKTERMEIRPESPADSVAANGQYSISSSDFERQQRKIIELWAACNVPLVHRTYFFLLFKGDPSDYVYMEVELRRLSFLKQTISNDMETSRMQTVKALTREKEWISKQLPKKFPWNQRIGLYQKWGVEVNSKQRSLQVAHKLWTNTQDMDHIKESASLVAKLLGFVEPSRMPKEMFGLSLLPRTENVKSSGWRFTKSFSAIRLTR</sequence>
<evidence type="ECO:0000250" key="1">
    <source>
        <dbReference type="UniProtKB" id="F4JQ51"/>
    </source>
</evidence>
<evidence type="ECO:0000255" key="2">
    <source>
        <dbReference type="PROSITE-ProRule" id="PRU00283"/>
    </source>
</evidence>
<evidence type="ECO:0000256" key="3">
    <source>
        <dbReference type="SAM" id="MobiDB-lite"/>
    </source>
</evidence>
<evidence type="ECO:0000303" key="4">
    <source>
    </source>
</evidence>
<evidence type="ECO:0000305" key="5"/>
<evidence type="ECO:0000312" key="6">
    <source>
        <dbReference type="Araport" id="AT5G42490"/>
    </source>
</evidence>
<evidence type="ECO:0000312" key="7">
    <source>
        <dbReference type="EMBL" id="BAB10490.1"/>
    </source>
</evidence>
<organism>
    <name type="scientific">Arabidopsis thaliana</name>
    <name type="common">Mouse-ear cress</name>
    <dbReference type="NCBI Taxonomy" id="3702"/>
    <lineage>
        <taxon>Eukaryota</taxon>
        <taxon>Viridiplantae</taxon>
        <taxon>Streptophyta</taxon>
        <taxon>Embryophyta</taxon>
        <taxon>Tracheophyta</taxon>
        <taxon>Spermatophyta</taxon>
        <taxon>Magnoliopsida</taxon>
        <taxon>eudicotyledons</taxon>
        <taxon>Gunneridae</taxon>
        <taxon>Pentapetalae</taxon>
        <taxon>rosids</taxon>
        <taxon>malvids</taxon>
        <taxon>Brassicales</taxon>
        <taxon>Brassicaceae</taxon>
        <taxon>Camelineae</taxon>
        <taxon>Arabidopsis</taxon>
    </lineage>
</organism>
<gene>
    <name evidence="5" type="primary">KIN7J</name>
    <name evidence="6" type="ordered locus">At5g42490</name>
    <name evidence="7" type="ORF">MDH9.19</name>
</gene>
<comment type="similarity">
    <text evidence="4">Belongs to the TRAFAC class myosin-kinesin ATPase superfamily. Kinesin family. KIN-7 subfamily.</text>
</comment>
<comment type="caution">
    <text evidence="5">The kinesin motor domain is truncated at the C-terminus in comparison with other members of the gene family.</text>
</comment>
<comment type="sequence caution" evidence="5">
    <conflict type="erroneous gene model prediction">
        <sequence resource="EMBL-CDS" id="AED94816"/>
    </conflict>
</comment>
<comment type="sequence caution" evidence="5">
    <conflict type="erroneous gene model prediction">
        <sequence resource="EMBL-CDS" id="BAB10490"/>
    </conflict>
</comment>